<gene>
    <name evidence="2" type="primary">tal</name>
    <name type="ordered locus">Shew_1089</name>
</gene>
<evidence type="ECO:0000250" key="1"/>
<evidence type="ECO:0000255" key="2">
    <source>
        <dbReference type="HAMAP-Rule" id="MF_00492"/>
    </source>
</evidence>
<proteinExistence type="inferred from homology"/>
<dbReference type="EC" id="2.2.1.2" evidence="2"/>
<dbReference type="EMBL" id="CP000606">
    <property type="protein sequence ID" value="ABO22960.1"/>
    <property type="molecule type" value="Genomic_DNA"/>
</dbReference>
<dbReference type="RefSeq" id="WP_011864893.1">
    <property type="nucleotide sequence ID" value="NC_009092.1"/>
</dbReference>
<dbReference type="SMR" id="A3QBW2"/>
<dbReference type="STRING" id="323850.Shew_1089"/>
<dbReference type="KEGG" id="slo:Shew_1089"/>
<dbReference type="eggNOG" id="COG0176">
    <property type="taxonomic scope" value="Bacteria"/>
</dbReference>
<dbReference type="HOGENOM" id="CLU_047470_0_1_6"/>
<dbReference type="OrthoDB" id="9809101at2"/>
<dbReference type="UniPathway" id="UPA00115">
    <property type="reaction ID" value="UER00414"/>
</dbReference>
<dbReference type="Proteomes" id="UP000001558">
    <property type="component" value="Chromosome"/>
</dbReference>
<dbReference type="GO" id="GO:0005829">
    <property type="term" value="C:cytosol"/>
    <property type="evidence" value="ECO:0007669"/>
    <property type="project" value="TreeGrafter"/>
</dbReference>
<dbReference type="GO" id="GO:0004801">
    <property type="term" value="F:transaldolase activity"/>
    <property type="evidence" value="ECO:0000250"/>
    <property type="project" value="UniProtKB"/>
</dbReference>
<dbReference type="GO" id="GO:0005975">
    <property type="term" value="P:carbohydrate metabolic process"/>
    <property type="evidence" value="ECO:0007669"/>
    <property type="project" value="InterPro"/>
</dbReference>
<dbReference type="GO" id="GO:0006098">
    <property type="term" value="P:pentose-phosphate shunt"/>
    <property type="evidence" value="ECO:0007669"/>
    <property type="project" value="UniProtKB-UniRule"/>
</dbReference>
<dbReference type="CDD" id="cd00957">
    <property type="entry name" value="Transaldolase_TalAB"/>
    <property type="match status" value="1"/>
</dbReference>
<dbReference type="FunFam" id="3.20.20.70:FF:000002">
    <property type="entry name" value="Transaldolase"/>
    <property type="match status" value="1"/>
</dbReference>
<dbReference type="Gene3D" id="3.20.20.70">
    <property type="entry name" value="Aldolase class I"/>
    <property type="match status" value="1"/>
</dbReference>
<dbReference type="HAMAP" id="MF_00492">
    <property type="entry name" value="Transaldolase_1"/>
    <property type="match status" value="1"/>
</dbReference>
<dbReference type="InterPro" id="IPR013785">
    <property type="entry name" value="Aldolase_TIM"/>
</dbReference>
<dbReference type="InterPro" id="IPR001585">
    <property type="entry name" value="TAL/FSA"/>
</dbReference>
<dbReference type="InterPro" id="IPR004730">
    <property type="entry name" value="Transaldolase_1"/>
</dbReference>
<dbReference type="InterPro" id="IPR018225">
    <property type="entry name" value="Transaldolase_AS"/>
</dbReference>
<dbReference type="NCBIfam" id="NF009001">
    <property type="entry name" value="PRK12346.1"/>
    <property type="match status" value="1"/>
</dbReference>
<dbReference type="NCBIfam" id="TIGR00874">
    <property type="entry name" value="talAB"/>
    <property type="match status" value="1"/>
</dbReference>
<dbReference type="PANTHER" id="PTHR10683">
    <property type="entry name" value="TRANSALDOLASE"/>
    <property type="match status" value="1"/>
</dbReference>
<dbReference type="PANTHER" id="PTHR10683:SF18">
    <property type="entry name" value="TRANSALDOLASE"/>
    <property type="match status" value="1"/>
</dbReference>
<dbReference type="Pfam" id="PF00923">
    <property type="entry name" value="TAL_FSA"/>
    <property type="match status" value="1"/>
</dbReference>
<dbReference type="SUPFAM" id="SSF51569">
    <property type="entry name" value="Aldolase"/>
    <property type="match status" value="1"/>
</dbReference>
<dbReference type="PROSITE" id="PS01054">
    <property type="entry name" value="TRANSALDOLASE_1"/>
    <property type="match status" value="1"/>
</dbReference>
<dbReference type="PROSITE" id="PS00958">
    <property type="entry name" value="TRANSALDOLASE_2"/>
    <property type="match status" value="1"/>
</dbReference>
<keyword id="KW-0963">Cytoplasm</keyword>
<keyword id="KW-0570">Pentose shunt</keyword>
<keyword id="KW-1185">Reference proteome</keyword>
<keyword id="KW-0704">Schiff base</keyword>
<keyword id="KW-0808">Transferase</keyword>
<accession>A3QBW2</accession>
<protein>
    <recommendedName>
        <fullName evidence="2">Transaldolase</fullName>
        <ecNumber evidence="2">2.2.1.2</ecNumber>
    </recommendedName>
</protein>
<comment type="function">
    <text evidence="2">Transaldolase is important for the balance of metabolites in the pentose-phosphate pathway.</text>
</comment>
<comment type="catalytic activity">
    <reaction evidence="2">
        <text>D-sedoheptulose 7-phosphate + D-glyceraldehyde 3-phosphate = D-erythrose 4-phosphate + beta-D-fructose 6-phosphate</text>
        <dbReference type="Rhea" id="RHEA:17053"/>
        <dbReference type="ChEBI" id="CHEBI:16897"/>
        <dbReference type="ChEBI" id="CHEBI:57483"/>
        <dbReference type="ChEBI" id="CHEBI:57634"/>
        <dbReference type="ChEBI" id="CHEBI:59776"/>
        <dbReference type="EC" id="2.2.1.2"/>
    </reaction>
</comment>
<comment type="pathway">
    <text evidence="2">Carbohydrate degradation; pentose phosphate pathway; D-glyceraldehyde 3-phosphate and beta-D-fructose 6-phosphate from D-ribose 5-phosphate and D-xylulose 5-phosphate (non-oxidative stage): step 2/3.</text>
</comment>
<comment type="subunit">
    <text evidence="1">Homodimer.</text>
</comment>
<comment type="subcellular location">
    <subcellularLocation>
        <location evidence="2">Cytoplasm</location>
    </subcellularLocation>
</comment>
<comment type="similarity">
    <text evidence="2">Belongs to the transaldolase family. Type 1 subfamily.</text>
</comment>
<reference key="1">
    <citation type="submission" date="2007-03" db="EMBL/GenBank/DDBJ databases">
        <title>Complete sequence of Shewanella loihica PV-4.</title>
        <authorList>
            <consortium name="US DOE Joint Genome Institute"/>
            <person name="Copeland A."/>
            <person name="Lucas S."/>
            <person name="Lapidus A."/>
            <person name="Barry K."/>
            <person name="Detter J.C."/>
            <person name="Glavina del Rio T."/>
            <person name="Hammon N."/>
            <person name="Israni S."/>
            <person name="Dalin E."/>
            <person name="Tice H."/>
            <person name="Pitluck S."/>
            <person name="Chain P."/>
            <person name="Malfatti S."/>
            <person name="Shin M."/>
            <person name="Vergez L."/>
            <person name="Schmutz J."/>
            <person name="Larimer F."/>
            <person name="Land M."/>
            <person name="Hauser L."/>
            <person name="Kyrpides N."/>
            <person name="Mikhailova N."/>
            <person name="Romine M.F."/>
            <person name="Serres G."/>
            <person name="Fredrickson J."/>
            <person name="Tiedje J."/>
            <person name="Richardson P."/>
        </authorList>
    </citation>
    <scope>NUCLEOTIDE SEQUENCE [LARGE SCALE GENOMIC DNA]</scope>
    <source>
        <strain>ATCC BAA-1088 / PV-4</strain>
    </source>
</reference>
<sequence length="318" mass="34863">MANTLEQFKSITTIVADTGDIEAIKRYQPQDATTNPSLILKAAQIPEYKHLIANAIEWAKAQSDDLAQQVEDAGDKLAVNIGLEILKIVPGRISTEVDARLSFDKAGSIEKAHKLIKLYEEAGIDKSRILIKLASTWEGICAAKELEKEGINCNLTLLFCFAQARACAEAGVYLISPFVGRILDWYKKDTGLEYSAAEDPGVVSVTNIYNYYKRHGYKTVVMGASFRNTGEIIELAGCDRLTIGPALLEEMANSDTPVVQKLQAANEVVAPGAALSEAEFRWEFNQDAMAVEKLAEGIRNFAIDQGKLETMLKAELEA</sequence>
<feature type="chain" id="PRO_1000014525" description="Transaldolase">
    <location>
        <begin position="1"/>
        <end position="318"/>
    </location>
</feature>
<feature type="active site" description="Schiff-base intermediate with substrate" evidence="2">
    <location>
        <position position="132"/>
    </location>
</feature>
<organism>
    <name type="scientific">Shewanella loihica (strain ATCC BAA-1088 / PV-4)</name>
    <dbReference type="NCBI Taxonomy" id="323850"/>
    <lineage>
        <taxon>Bacteria</taxon>
        <taxon>Pseudomonadati</taxon>
        <taxon>Pseudomonadota</taxon>
        <taxon>Gammaproteobacteria</taxon>
        <taxon>Alteromonadales</taxon>
        <taxon>Shewanellaceae</taxon>
        <taxon>Shewanella</taxon>
    </lineage>
</organism>
<name>TAL_SHELP</name>